<organism>
    <name type="scientific">Mus musculus</name>
    <name type="common">Mouse</name>
    <dbReference type="NCBI Taxonomy" id="10090"/>
    <lineage>
        <taxon>Eukaryota</taxon>
        <taxon>Metazoa</taxon>
        <taxon>Chordata</taxon>
        <taxon>Craniata</taxon>
        <taxon>Vertebrata</taxon>
        <taxon>Euteleostomi</taxon>
        <taxon>Mammalia</taxon>
        <taxon>Eutheria</taxon>
        <taxon>Euarchontoglires</taxon>
        <taxon>Glires</taxon>
        <taxon>Rodentia</taxon>
        <taxon>Myomorpha</taxon>
        <taxon>Muroidea</taxon>
        <taxon>Muridae</taxon>
        <taxon>Murinae</taxon>
        <taxon>Mus</taxon>
        <taxon>Mus</taxon>
    </lineage>
</organism>
<comment type="function">
    <text evidence="2 8">Adapter protein involved in neuronal nitric-oxide (NO) synthesis regulation via its association with nNOS/NOS1. The complex formed with NOS1 and synapsins is necessary for specific NO and synapsin functions at a presynaptic level. Mediates an indirect interaction between NOS1 and RASD1 leading to enhance the ability of NOS1 to activate RASD1. Competes with DLG4 for interaction with NOS1, possibly affecting NOS1 activity by regulating the interaction between NOS1 and DLG4 (By similarity). In kidney podocytes, plays a role in podosomes and filopodia formation through CDC42 activation (PubMed:33523862).</text>
</comment>
<comment type="subunit">
    <text evidence="1 7">Interacts with the PDZ domain of NOS1 or the second PDZ domain of DLG4 through its C-terminus. Interacts with RASD1 and SYN1, SYN2 and SYN3 via its PID domain. Forms a ternary complex with NOS1 and SYN1 (By similarity). Forms a ternary complex with NOS1 and RASD1.</text>
</comment>
<comment type="subcellular location">
    <subcellularLocation>
        <location evidence="2">Cell projection</location>
        <location evidence="2">Filopodium</location>
    </subcellularLocation>
    <subcellularLocation>
        <location evidence="2">Cell projection</location>
        <location evidence="2">Podosome</location>
    </subcellularLocation>
</comment>
<comment type="alternative products">
    <event type="alternative splicing"/>
    <isoform>
        <id>Q9D3A8-1</id>
        <name>1</name>
        <sequence type="displayed"/>
    </isoform>
    <isoform>
        <id>Q9D3A8-2</id>
        <name>2</name>
        <sequence type="described" ref="VSP_012462 VSP_012463"/>
    </isoform>
</comment>
<sequence length="503" mass="55873">MPSKTKYNLVDDGHDLRIPLHNEDAFQHGISFEAKYVGSLDVPRPNSRVEIVAAMRRIRYEFKAKNIKKKKVSIMVSVDGVKVILKKKKKKKEWTWDESKMLVMQDPIYRIFYVSHDSQDLKIFSYIARDGASNIFRCNVFKSKKKSQAMRIVRTVGQAFEVCHKLSLQHTQQNADGQEDGESERNSDGSGDPGRQLTGAERVSTAAAEETDIDAVEVPLPGNDILEFSRGVTDLDAVGKDGGSHIDSTVSPHPQEPMLTASPRMLLPSSSSKPPGLGTGTPLSTHHQMQLLQQLLQQQQQQTQVAVAQVHLLKDQLAAEAAARLEAQARVHQLLLQNKDMLQHISLLVKQVQELELKLSGQNTMGSQDSLLEITFRSGALPVLCESTTPKPEDLHSPLLGAGLADFAHPAGSPLGRHDCLVKLECFRFLPPEDTQPMMAQGEPLLGGLELIKFRESGIASEYESNTDESEERDSWSQEELPRLLNVLQRQELGDSLDDEIAV</sequence>
<proteinExistence type="evidence at protein level"/>
<evidence type="ECO:0000250" key="1"/>
<evidence type="ECO:0000250" key="2">
    <source>
        <dbReference type="UniProtKB" id="O54960"/>
    </source>
</evidence>
<evidence type="ECO:0000250" key="3">
    <source>
        <dbReference type="UniProtKB" id="O75052"/>
    </source>
</evidence>
<evidence type="ECO:0000255" key="4"/>
<evidence type="ECO:0000255" key="5">
    <source>
        <dbReference type="PROSITE-ProRule" id="PRU00148"/>
    </source>
</evidence>
<evidence type="ECO:0000256" key="6">
    <source>
        <dbReference type="SAM" id="MobiDB-lite"/>
    </source>
</evidence>
<evidence type="ECO:0000269" key="7">
    <source>
    </source>
</evidence>
<evidence type="ECO:0000269" key="8">
    <source>
    </source>
</evidence>
<evidence type="ECO:0000303" key="9">
    <source>
    </source>
</evidence>
<evidence type="ECO:0000305" key="10"/>
<evidence type="ECO:0000312" key="11">
    <source>
        <dbReference type="MGI" id="MGI:1917979"/>
    </source>
</evidence>
<evidence type="ECO:0007744" key="12">
    <source>
    </source>
</evidence>
<evidence type="ECO:0007744" key="13">
    <source>
    </source>
</evidence>
<accession>Q9D3A8</accession>
<accession>E9Q7B9</accession>
<accession>Q80TZ6</accession>
<dbReference type="EMBL" id="AK018149">
    <property type="protein sequence ID" value="BAB31095.1"/>
    <property type="molecule type" value="mRNA"/>
</dbReference>
<dbReference type="EMBL" id="AC119431">
    <property type="status" value="NOT_ANNOTATED_CDS"/>
    <property type="molecule type" value="Genomic_DNA"/>
</dbReference>
<dbReference type="EMBL" id="AC123650">
    <property type="status" value="NOT_ANNOTATED_CDS"/>
    <property type="molecule type" value="Genomic_DNA"/>
</dbReference>
<dbReference type="EMBL" id="AC125017">
    <property type="status" value="NOT_ANNOTATED_CDS"/>
    <property type="molecule type" value="Genomic_DNA"/>
</dbReference>
<dbReference type="EMBL" id="AC125021">
    <property type="status" value="NOT_ANNOTATED_CDS"/>
    <property type="molecule type" value="Genomic_DNA"/>
</dbReference>
<dbReference type="EMBL" id="AK122290">
    <property type="protein sequence ID" value="BAC65572.3"/>
    <property type="molecule type" value="Transcribed_RNA"/>
</dbReference>
<dbReference type="CCDS" id="CCDS48438.1">
    <molecule id="Q9D3A8-1"/>
</dbReference>
<dbReference type="RefSeq" id="NP_001103455.1">
    <molecule id="Q9D3A8-1"/>
    <property type="nucleotide sequence ID" value="NM_001109985.3"/>
</dbReference>
<dbReference type="SMR" id="Q9D3A8"/>
<dbReference type="BioGRID" id="214224">
    <property type="interactions" value="2"/>
</dbReference>
<dbReference type="CORUM" id="Q9D3A8"/>
<dbReference type="FunCoup" id="Q9D3A8">
    <property type="interactions" value="765"/>
</dbReference>
<dbReference type="STRING" id="10090.ENSMUSP00000125251"/>
<dbReference type="iPTMnet" id="Q9D3A8"/>
<dbReference type="PhosphoSitePlus" id="Q9D3A8"/>
<dbReference type="PaxDb" id="10090-ENSMUSP00000125251"/>
<dbReference type="PeptideAtlas" id="Q9D3A8"/>
<dbReference type="ProteomicsDB" id="265433">
    <molecule id="Q9D3A8-1"/>
</dbReference>
<dbReference type="ProteomicsDB" id="265434">
    <molecule id="Q9D3A8-2"/>
</dbReference>
<dbReference type="Antibodypedia" id="4346">
    <property type="antibodies" value="244 antibodies from 28 providers"/>
</dbReference>
<dbReference type="DNASU" id="70729"/>
<dbReference type="Ensembl" id="ENSMUST00000160456.8">
    <molecule id="Q9D3A8-1"/>
    <property type="protein sequence ID" value="ENSMUSP00000125251.2"/>
    <property type="gene ID" value="ENSMUSG00000038473.15"/>
</dbReference>
<dbReference type="GeneID" id="70729"/>
<dbReference type="KEGG" id="mmu:70729"/>
<dbReference type="UCSC" id="uc011wvt.1">
    <molecule id="Q9D3A8-1"/>
    <property type="organism name" value="mouse"/>
</dbReference>
<dbReference type="AGR" id="MGI:1917979"/>
<dbReference type="CTD" id="9722"/>
<dbReference type="MGI" id="MGI:1917979">
    <property type="gene designation" value="Nos1ap"/>
</dbReference>
<dbReference type="VEuPathDB" id="HostDB:ENSMUSG00000038473"/>
<dbReference type="eggNOG" id="KOG4458">
    <property type="taxonomic scope" value="Eukaryota"/>
</dbReference>
<dbReference type="eggNOG" id="KOG4815">
    <property type="taxonomic scope" value="Eukaryota"/>
</dbReference>
<dbReference type="GeneTree" id="ENSGT00510000046975"/>
<dbReference type="HOGENOM" id="CLU_040178_1_0_1"/>
<dbReference type="InParanoid" id="Q9D3A8"/>
<dbReference type="OMA" id="QNTMGSQ"/>
<dbReference type="OrthoDB" id="10030336at2759"/>
<dbReference type="PhylomeDB" id="Q9D3A8"/>
<dbReference type="TreeFam" id="TF317226"/>
<dbReference type="BioGRID-ORCS" id="70729">
    <property type="hits" value="3 hits in 77 CRISPR screens"/>
</dbReference>
<dbReference type="ChiTaRS" id="Nos1ap">
    <property type="organism name" value="mouse"/>
</dbReference>
<dbReference type="PRO" id="PR:Q9D3A8"/>
<dbReference type="Proteomes" id="UP000000589">
    <property type="component" value="Chromosome 1"/>
</dbReference>
<dbReference type="RNAct" id="Q9D3A8">
    <property type="molecule type" value="protein"/>
</dbReference>
<dbReference type="Bgee" id="ENSMUSG00000038473">
    <property type="expression patterns" value="Expressed in primary motor cortex and 165 other cell types or tissues"/>
</dbReference>
<dbReference type="ExpressionAtlas" id="Q9D3A8">
    <property type="expression patterns" value="baseline and differential"/>
</dbReference>
<dbReference type="GO" id="GO:0070161">
    <property type="term" value="C:anchoring junction"/>
    <property type="evidence" value="ECO:0007669"/>
    <property type="project" value="UniProtKB-KW"/>
</dbReference>
<dbReference type="GO" id="GO:0030175">
    <property type="term" value="C:filopodium"/>
    <property type="evidence" value="ECO:0007669"/>
    <property type="project" value="UniProtKB-SubCell"/>
</dbReference>
<dbReference type="GO" id="GO:0098978">
    <property type="term" value="C:glutamatergic synapse"/>
    <property type="evidence" value="ECO:0007669"/>
    <property type="project" value="Ensembl"/>
</dbReference>
<dbReference type="GO" id="GO:0005739">
    <property type="term" value="C:mitochondrion"/>
    <property type="evidence" value="ECO:0000314"/>
    <property type="project" value="BHF-UCL"/>
</dbReference>
<dbReference type="GO" id="GO:0002102">
    <property type="term" value="C:podosome"/>
    <property type="evidence" value="ECO:0007669"/>
    <property type="project" value="UniProtKB-SubCell"/>
</dbReference>
<dbReference type="GO" id="GO:0033017">
    <property type="term" value="C:sarcoplasmic reticulum membrane"/>
    <property type="evidence" value="ECO:0000314"/>
    <property type="project" value="BHF-UCL"/>
</dbReference>
<dbReference type="GO" id="GO:0030018">
    <property type="term" value="C:Z disc"/>
    <property type="evidence" value="ECO:0000314"/>
    <property type="project" value="BHF-UCL"/>
</dbReference>
<dbReference type="GO" id="GO:0050998">
    <property type="term" value="F:nitric-oxide synthase binding"/>
    <property type="evidence" value="ECO:0000353"/>
    <property type="project" value="BHF-UCL"/>
</dbReference>
<dbReference type="GO" id="GO:0098974">
    <property type="term" value="P:postsynaptic actin cytoskeleton organization"/>
    <property type="evidence" value="ECO:0007669"/>
    <property type="project" value="Ensembl"/>
</dbReference>
<dbReference type="GO" id="GO:0003062">
    <property type="term" value="P:regulation of heart rate by chemical signal"/>
    <property type="evidence" value="ECO:0007669"/>
    <property type="project" value="Ensembl"/>
</dbReference>
<dbReference type="GO" id="GO:0060307">
    <property type="term" value="P:regulation of ventricular cardiac muscle cell membrane repolarization"/>
    <property type="evidence" value="ECO:0007669"/>
    <property type="project" value="Ensembl"/>
</dbReference>
<dbReference type="CDD" id="cd01270">
    <property type="entry name" value="PTB_CAPON-like"/>
    <property type="match status" value="1"/>
</dbReference>
<dbReference type="FunFam" id="2.30.29.30:FF:000124">
    <property type="entry name" value="carboxyl-terminal PDZ ligand of neuronal nitric oxide synthase protein-like"/>
    <property type="match status" value="1"/>
</dbReference>
<dbReference type="Gene3D" id="2.30.29.30">
    <property type="entry name" value="Pleckstrin-homology domain (PH domain)/Phosphotyrosine-binding domain (PTB)"/>
    <property type="match status" value="1"/>
</dbReference>
<dbReference type="InterPro" id="IPR051133">
    <property type="entry name" value="Adapter_Engulfment-Domain"/>
</dbReference>
<dbReference type="InterPro" id="IPR011993">
    <property type="entry name" value="PH-like_dom_sf"/>
</dbReference>
<dbReference type="InterPro" id="IPR006020">
    <property type="entry name" value="PTB/PI_dom"/>
</dbReference>
<dbReference type="PANTHER" id="PTHR11232:SF76">
    <property type="entry name" value="CARBOXYL-TERMINAL PDZ LIGAND OF NEURONAL NITRIC OXIDE SYNTHASE PROTEIN"/>
    <property type="match status" value="1"/>
</dbReference>
<dbReference type="PANTHER" id="PTHR11232">
    <property type="entry name" value="PHOSPHOTYROSINE INTERACTION DOMAIN-CONTAINING FAMILY MEMBER"/>
    <property type="match status" value="1"/>
</dbReference>
<dbReference type="Pfam" id="PF00640">
    <property type="entry name" value="PID"/>
    <property type="match status" value="1"/>
</dbReference>
<dbReference type="SMART" id="SM00462">
    <property type="entry name" value="PTB"/>
    <property type="match status" value="1"/>
</dbReference>
<dbReference type="SUPFAM" id="SSF50729">
    <property type="entry name" value="PH domain-like"/>
    <property type="match status" value="1"/>
</dbReference>
<dbReference type="PROSITE" id="PS01179">
    <property type="entry name" value="PID"/>
    <property type="match status" value="1"/>
</dbReference>
<keyword id="KW-0025">Alternative splicing</keyword>
<keyword id="KW-0965">Cell junction</keyword>
<keyword id="KW-0966">Cell projection</keyword>
<keyword id="KW-0175">Coiled coil</keyword>
<keyword id="KW-0597">Phosphoprotein</keyword>
<keyword id="KW-1185">Reference proteome</keyword>
<gene>
    <name evidence="11" type="primary">Nos1ap</name>
    <name type="synonym">Capon</name>
    <name type="synonym">Kiaa0464</name>
</gene>
<reference key="1">
    <citation type="journal article" date="2005" name="Science">
        <title>The transcriptional landscape of the mammalian genome.</title>
        <authorList>
            <person name="Carninci P."/>
            <person name="Kasukawa T."/>
            <person name="Katayama S."/>
            <person name="Gough J."/>
            <person name="Frith M.C."/>
            <person name="Maeda N."/>
            <person name="Oyama R."/>
            <person name="Ravasi T."/>
            <person name="Lenhard B."/>
            <person name="Wells C."/>
            <person name="Kodzius R."/>
            <person name="Shimokawa K."/>
            <person name="Bajic V.B."/>
            <person name="Brenner S.E."/>
            <person name="Batalov S."/>
            <person name="Forrest A.R."/>
            <person name="Zavolan M."/>
            <person name="Davis M.J."/>
            <person name="Wilming L.G."/>
            <person name="Aidinis V."/>
            <person name="Allen J.E."/>
            <person name="Ambesi-Impiombato A."/>
            <person name="Apweiler R."/>
            <person name="Aturaliya R.N."/>
            <person name="Bailey T.L."/>
            <person name="Bansal M."/>
            <person name="Baxter L."/>
            <person name="Beisel K.W."/>
            <person name="Bersano T."/>
            <person name="Bono H."/>
            <person name="Chalk A.M."/>
            <person name="Chiu K.P."/>
            <person name="Choudhary V."/>
            <person name="Christoffels A."/>
            <person name="Clutterbuck D.R."/>
            <person name="Crowe M.L."/>
            <person name="Dalla E."/>
            <person name="Dalrymple B.P."/>
            <person name="de Bono B."/>
            <person name="Della Gatta G."/>
            <person name="di Bernardo D."/>
            <person name="Down T."/>
            <person name="Engstrom P."/>
            <person name="Fagiolini M."/>
            <person name="Faulkner G."/>
            <person name="Fletcher C.F."/>
            <person name="Fukushima T."/>
            <person name="Furuno M."/>
            <person name="Futaki S."/>
            <person name="Gariboldi M."/>
            <person name="Georgii-Hemming P."/>
            <person name="Gingeras T.R."/>
            <person name="Gojobori T."/>
            <person name="Green R.E."/>
            <person name="Gustincich S."/>
            <person name="Harbers M."/>
            <person name="Hayashi Y."/>
            <person name="Hensch T.K."/>
            <person name="Hirokawa N."/>
            <person name="Hill D."/>
            <person name="Huminiecki L."/>
            <person name="Iacono M."/>
            <person name="Ikeo K."/>
            <person name="Iwama A."/>
            <person name="Ishikawa T."/>
            <person name="Jakt M."/>
            <person name="Kanapin A."/>
            <person name="Katoh M."/>
            <person name="Kawasawa Y."/>
            <person name="Kelso J."/>
            <person name="Kitamura H."/>
            <person name="Kitano H."/>
            <person name="Kollias G."/>
            <person name="Krishnan S.P."/>
            <person name="Kruger A."/>
            <person name="Kummerfeld S.K."/>
            <person name="Kurochkin I.V."/>
            <person name="Lareau L.F."/>
            <person name="Lazarevic D."/>
            <person name="Lipovich L."/>
            <person name="Liu J."/>
            <person name="Liuni S."/>
            <person name="McWilliam S."/>
            <person name="Madan Babu M."/>
            <person name="Madera M."/>
            <person name="Marchionni L."/>
            <person name="Matsuda H."/>
            <person name="Matsuzawa S."/>
            <person name="Miki H."/>
            <person name="Mignone F."/>
            <person name="Miyake S."/>
            <person name="Morris K."/>
            <person name="Mottagui-Tabar S."/>
            <person name="Mulder N."/>
            <person name="Nakano N."/>
            <person name="Nakauchi H."/>
            <person name="Ng P."/>
            <person name="Nilsson R."/>
            <person name="Nishiguchi S."/>
            <person name="Nishikawa S."/>
            <person name="Nori F."/>
            <person name="Ohara O."/>
            <person name="Okazaki Y."/>
            <person name="Orlando V."/>
            <person name="Pang K.C."/>
            <person name="Pavan W.J."/>
            <person name="Pavesi G."/>
            <person name="Pesole G."/>
            <person name="Petrovsky N."/>
            <person name="Piazza S."/>
            <person name="Reed J."/>
            <person name="Reid J.F."/>
            <person name="Ring B.Z."/>
            <person name="Ringwald M."/>
            <person name="Rost B."/>
            <person name="Ruan Y."/>
            <person name="Salzberg S.L."/>
            <person name="Sandelin A."/>
            <person name="Schneider C."/>
            <person name="Schoenbach C."/>
            <person name="Sekiguchi K."/>
            <person name="Semple C.A."/>
            <person name="Seno S."/>
            <person name="Sessa L."/>
            <person name="Sheng Y."/>
            <person name="Shibata Y."/>
            <person name="Shimada H."/>
            <person name="Shimada K."/>
            <person name="Silva D."/>
            <person name="Sinclair B."/>
            <person name="Sperling S."/>
            <person name="Stupka E."/>
            <person name="Sugiura K."/>
            <person name="Sultana R."/>
            <person name="Takenaka Y."/>
            <person name="Taki K."/>
            <person name="Tammoja K."/>
            <person name="Tan S.L."/>
            <person name="Tang S."/>
            <person name="Taylor M.S."/>
            <person name="Tegner J."/>
            <person name="Teichmann S.A."/>
            <person name="Ueda H.R."/>
            <person name="van Nimwegen E."/>
            <person name="Verardo R."/>
            <person name="Wei C.L."/>
            <person name="Yagi K."/>
            <person name="Yamanishi H."/>
            <person name="Zabarovsky E."/>
            <person name="Zhu S."/>
            <person name="Zimmer A."/>
            <person name="Hide W."/>
            <person name="Bult C."/>
            <person name="Grimmond S.M."/>
            <person name="Teasdale R.D."/>
            <person name="Liu E.T."/>
            <person name="Brusic V."/>
            <person name="Quackenbush J."/>
            <person name="Wahlestedt C."/>
            <person name="Mattick J.S."/>
            <person name="Hume D.A."/>
            <person name="Kai C."/>
            <person name="Sasaki D."/>
            <person name="Tomaru Y."/>
            <person name="Fukuda S."/>
            <person name="Kanamori-Katayama M."/>
            <person name="Suzuki M."/>
            <person name="Aoki J."/>
            <person name="Arakawa T."/>
            <person name="Iida J."/>
            <person name="Imamura K."/>
            <person name="Itoh M."/>
            <person name="Kato T."/>
            <person name="Kawaji H."/>
            <person name="Kawagashira N."/>
            <person name="Kawashima T."/>
            <person name="Kojima M."/>
            <person name="Kondo S."/>
            <person name="Konno H."/>
            <person name="Nakano K."/>
            <person name="Ninomiya N."/>
            <person name="Nishio T."/>
            <person name="Okada M."/>
            <person name="Plessy C."/>
            <person name="Shibata K."/>
            <person name="Shiraki T."/>
            <person name="Suzuki S."/>
            <person name="Tagami M."/>
            <person name="Waki K."/>
            <person name="Watahiki A."/>
            <person name="Okamura-Oho Y."/>
            <person name="Suzuki H."/>
            <person name="Kawai J."/>
            <person name="Hayashizaki Y."/>
        </authorList>
    </citation>
    <scope>NUCLEOTIDE SEQUENCE [LARGE SCALE MRNA] (ISOFORM 2)</scope>
    <source>
        <strain>C57BL/6J</strain>
        <tissue>Medulla oblongata</tissue>
    </source>
</reference>
<reference key="2">
    <citation type="journal article" date="2009" name="PLoS Biol.">
        <title>Lineage-specific biology revealed by a finished genome assembly of the mouse.</title>
        <authorList>
            <person name="Church D.M."/>
            <person name="Goodstadt L."/>
            <person name="Hillier L.W."/>
            <person name="Zody M.C."/>
            <person name="Goldstein S."/>
            <person name="She X."/>
            <person name="Bult C.J."/>
            <person name="Agarwala R."/>
            <person name="Cherry J.L."/>
            <person name="DiCuccio M."/>
            <person name="Hlavina W."/>
            <person name="Kapustin Y."/>
            <person name="Meric P."/>
            <person name="Maglott D."/>
            <person name="Birtle Z."/>
            <person name="Marques A.C."/>
            <person name="Graves T."/>
            <person name="Zhou S."/>
            <person name="Teague B."/>
            <person name="Potamousis K."/>
            <person name="Churas C."/>
            <person name="Place M."/>
            <person name="Herschleb J."/>
            <person name="Runnheim R."/>
            <person name="Forrest D."/>
            <person name="Amos-Landgraf J."/>
            <person name="Schwartz D.C."/>
            <person name="Cheng Z."/>
            <person name="Lindblad-Toh K."/>
            <person name="Eichler E.E."/>
            <person name="Ponting C.P."/>
        </authorList>
    </citation>
    <scope>NUCLEOTIDE SEQUENCE [LARGE SCALE GENOMIC DNA]</scope>
    <source>
        <strain>C57BL/6J</strain>
    </source>
</reference>
<reference key="3">
    <citation type="journal article" date="2003" name="DNA Res.">
        <title>Prediction of the coding sequences of mouse homologues of KIAA gene: II. The complete nucleotide sequences of 400 mouse KIAA-homologous cDNAs identified by screening of terminal sequences of cDNA clones randomly sampled from size-fractionated libraries.</title>
        <authorList>
            <person name="Okazaki N."/>
            <person name="Kikuno R."/>
            <person name="Ohara R."/>
            <person name="Inamoto S."/>
            <person name="Aizawa H."/>
            <person name="Yuasa S."/>
            <person name="Nakajima D."/>
            <person name="Nagase T."/>
            <person name="Ohara O."/>
            <person name="Koga H."/>
        </authorList>
    </citation>
    <scope>NUCLEOTIDE SEQUENCE [LARGE SCALE MRNA] OF 195-503 (ISOFORM 1)</scope>
    <source>
        <tissue>Brain</tissue>
    </source>
</reference>
<reference key="4">
    <citation type="journal article" date="2000" name="Neuron">
        <title>Dexras1: a G protein specifically coupled to neuronal nitric oxide synthase via CAPON.</title>
        <authorList>
            <person name="Fang M."/>
            <person name="Jaffrey S.R."/>
            <person name="Sawa A."/>
            <person name="Ye K."/>
            <person name="Luo X."/>
            <person name="Snyder S.H."/>
        </authorList>
    </citation>
    <scope>INTERACTION WITH RASD1 AND NOS1</scope>
</reference>
<reference key="5">
    <citation type="journal article" date="2007" name="Proc. Natl. Acad. Sci. U.S.A.">
        <title>Large-scale phosphorylation analysis of mouse liver.</title>
        <authorList>
            <person name="Villen J."/>
            <person name="Beausoleil S.A."/>
            <person name="Gerber S.A."/>
            <person name="Gygi S.P."/>
        </authorList>
    </citation>
    <scope>PHOSPHORYLATION [LARGE SCALE ANALYSIS] AT SER-183; SER-187; SER-190 AND SER-370</scope>
    <scope>IDENTIFICATION BY MASS SPECTROMETRY [LARGE SCALE ANALYSIS]</scope>
    <source>
        <tissue>Liver</tissue>
    </source>
</reference>
<reference key="6">
    <citation type="journal article" date="2010" name="Cell">
        <title>A tissue-specific atlas of mouse protein phosphorylation and expression.</title>
        <authorList>
            <person name="Huttlin E.L."/>
            <person name="Jedrychowski M.P."/>
            <person name="Elias J.E."/>
            <person name="Goswami T."/>
            <person name="Rad R."/>
            <person name="Beausoleil S.A."/>
            <person name="Villen J."/>
            <person name="Haas W."/>
            <person name="Sowa M.E."/>
            <person name="Gygi S.P."/>
        </authorList>
    </citation>
    <scope>PHOSPHORYLATION [LARGE SCALE ANALYSIS] AT SER-183; SER-187; SER-190; SER-367; SER-370; SER-397 AND SER-413</scope>
    <scope>IDENTIFICATION BY MASS SPECTROMETRY [LARGE SCALE ANALYSIS]</scope>
    <source>
        <tissue>Brain</tissue>
        <tissue>Heart</tissue>
        <tissue>Kidney</tissue>
        <tissue>Liver</tissue>
        <tissue>Lung</tissue>
        <tissue>Spleen</tissue>
    </source>
</reference>
<reference key="7">
    <citation type="journal article" date="2021" name="Sci. Adv.">
        <title>Recessive NOS1AP variants impair actin remodeling and cause glomerulopathy in humans and mice.</title>
        <authorList>
            <person name="Majmundar A.J."/>
            <person name="Buerger F."/>
            <person name="Forbes T.A."/>
            <person name="Klaembt V."/>
            <person name="Schneider R."/>
            <person name="Deutsch K."/>
            <person name="Kitzler T.M."/>
            <person name="Howden S.E."/>
            <person name="Scurr M."/>
            <person name="Tan K.S."/>
            <person name="Krzeminski M."/>
            <person name="Widmeier E."/>
            <person name="Braun D.A."/>
            <person name="Lai E."/>
            <person name="Ullah I."/>
            <person name="Amar A."/>
            <person name="Kolb A."/>
            <person name="Eddy K."/>
            <person name="Chen C.H."/>
            <person name="Salmanullah D."/>
            <person name="Dai R."/>
            <person name="Nakayama M."/>
            <person name="Ottlewski I."/>
            <person name="Kolvenbach C.M."/>
            <person name="Onuchic-Whitford A.C."/>
            <person name="Mao Y."/>
            <person name="Mann N."/>
            <person name="Nabhan M.M."/>
            <person name="Rosen S."/>
            <person name="Forman-Kay J.D."/>
            <person name="Soliman N.A."/>
            <person name="Heilos A."/>
            <person name="Kain R."/>
            <person name="Aufricht C."/>
            <person name="Mane S."/>
            <person name="Lifton R.P."/>
            <person name="Shril S."/>
            <person name="Little M.H."/>
            <person name="Hildebrandt F."/>
        </authorList>
    </citation>
    <scope>FUNCTION</scope>
</reference>
<feature type="chain" id="PRO_0000089317" description="Carboxyl-terminal PDZ ligand of neuronal nitric oxide synthase protein">
    <location>
        <begin position="1"/>
        <end position="503"/>
    </location>
</feature>
<feature type="domain" description="PID" evidence="5">
    <location>
        <begin position="26"/>
        <end position="191"/>
    </location>
</feature>
<feature type="region of interest" description="Disordered" evidence="6">
    <location>
        <begin position="170"/>
        <end position="212"/>
    </location>
</feature>
<feature type="region of interest" description="Interaction with NOS1" evidence="1">
    <location>
        <begin position="491"/>
        <end position="503"/>
    </location>
</feature>
<feature type="coiled-coil region" evidence="4">
    <location>
        <begin position="318"/>
        <end position="359"/>
    </location>
</feature>
<feature type="short sequence motif" description="PDZ-binding" evidence="1">
    <location>
        <begin position="501"/>
        <end position="503"/>
    </location>
</feature>
<feature type="modified residue" description="Phosphoserine" evidence="12 13">
    <location>
        <position position="183"/>
    </location>
</feature>
<feature type="modified residue" description="Phosphoserine" evidence="12 13">
    <location>
        <position position="187"/>
    </location>
</feature>
<feature type="modified residue" description="Phosphoserine" evidence="12 13">
    <location>
        <position position="190"/>
    </location>
</feature>
<feature type="modified residue" description="Phosphoserine" evidence="3">
    <location>
        <position position="262"/>
    </location>
</feature>
<feature type="modified residue" description="Phosphoserine" evidence="13">
    <location>
        <position position="367"/>
    </location>
</feature>
<feature type="modified residue" description="Phosphoserine" evidence="12 13">
    <location>
        <position position="370"/>
    </location>
</feature>
<feature type="modified residue" description="Phosphoserine" evidence="13">
    <location>
        <position position="397"/>
    </location>
</feature>
<feature type="modified residue" description="Phosphoserine" evidence="13">
    <location>
        <position position="413"/>
    </location>
</feature>
<feature type="splice variant" id="VSP_012462" description="In isoform 2." evidence="9">
    <original>LKDQLAAEAAARL</original>
    <variation>SLLPSSQAPLSWA</variation>
    <location>
        <begin position="313"/>
        <end position="325"/>
    </location>
</feature>
<feature type="splice variant" id="VSP_012463" description="In isoform 2." evidence="9">
    <location>
        <begin position="326"/>
        <end position="503"/>
    </location>
</feature>
<feature type="sequence conflict" description="In Ref. 1; BAB31095." evidence="10" ref="1">
    <original>A</original>
    <variation>S</variation>
    <location>
        <position position="25"/>
    </location>
</feature>
<feature type="sequence conflict" description="In Ref. 1; BAB31095." evidence="10" ref="1">
    <original>R</original>
    <variation>K</variation>
    <location>
        <position position="110"/>
    </location>
</feature>
<feature type="sequence conflict" description="In Ref. 1; BAB31095." evidence="10" ref="1">
    <original>G</original>
    <variation>A</variation>
    <location>
        <position position="157"/>
    </location>
</feature>
<feature type="sequence conflict" description="In Ref. 1; BAB31095 and 3; BAC65572." evidence="10" ref="1 3">
    <original>H</original>
    <variation>L</variation>
    <location>
        <position position="311"/>
    </location>
</feature>
<name>CAPON_MOUSE</name>
<protein>
    <recommendedName>
        <fullName evidence="10">Carboxyl-terminal PDZ ligand of neuronal nitric oxide synthase protein</fullName>
    </recommendedName>
    <alternativeName>
        <fullName>C-terminal PDZ ligand of neuronal nitric oxide synthase protein</fullName>
    </alternativeName>
    <alternativeName>
        <fullName>Nitric oxide synthase 1 adaptor protein</fullName>
    </alternativeName>
</protein>